<reference key="1">
    <citation type="journal article" date="2004" name="Proc. Natl. Acad. Sci. U.S.A.">
        <title>The diploid genome sequence of Candida albicans.</title>
        <authorList>
            <person name="Jones T."/>
            <person name="Federspiel N.A."/>
            <person name="Chibana H."/>
            <person name="Dungan J."/>
            <person name="Kalman S."/>
            <person name="Magee B.B."/>
            <person name="Newport G."/>
            <person name="Thorstenson Y.R."/>
            <person name="Agabian N."/>
            <person name="Magee P.T."/>
            <person name="Davis R.W."/>
            <person name="Scherer S."/>
        </authorList>
    </citation>
    <scope>NUCLEOTIDE SEQUENCE [LARGE SCALE GENOMIC DNA]</scope>
    <source>
        <strain>SC5314 / ATCC MYA-2876</strain>
    </source>
</reference>
<reference key="2">
    <citation type="journal article" date="2007" name="Genome Biol.">
        <title>Assembly of the Candida albicans genome into sixteen supercontigs aligned on the eight chromosomes.</title>
        <authorList>
            <person name="van het Hoog M."/>
            <person name="Rast T.J."/>
            <person name="Martchenko M."/>
            <person name="Grindle S."/>
            <person name="Dignard D."/>
            <person name="Hogues H."/>
            <person name="Cuomo C."/>
            <person name="Berriman M."/>
            <person name="Scherer S."/>
            <person name="Magee B.B."/>
            <person name="Whiteway M."/>
            <person name="Chibana H."/>
            <person name="Nantel A."/>
            <person name="Magee P.T."/>
        </authorList>
    </citation>
    <scope>GENOME REANNOTATION</scope>
    <source>
        <strain>SC5314 / ATCC MYA-2876</strain>
    </source>
</reference>
<reference key="3">
    <citation type="journal article" date="2013" name="Genome Biol.">
        <title>Assembly of a phased diploid Candida albicans genome facilitates allele-specific measurements and provides a simple model for repeat and indel structure.</title>
        <authorList>
            <person name="Muzzey D."/>
            <person name="Schwartz K."/>
            <person name="Weissman J.S."/>
            <person name="Sherlock G."/>
        </authorList>
    </citation>
    <scope>NUCLEOTIDE SEQUENCE [LARGE SCALE GENOMIC DNA]</scope>
    <scope>GENOME REANNOTATION</scope>
    <source>
        <strain>SC5314 / ATCC MYA-2876</strain>
    </source>
</reference>
<reference key="4">
    <citation type="journal article" date="2004" name="Eukaryot. Cell">
        <title>Role of Candida albicans transcription factor Upc2p in drug resistance and sterol metabolism.</title>
        <authorList>
            <person name="Silver P.M."/>
            <person name="Oliver B.G."/>
            <person name="White T.C."/>
        </authorList>
    </citation>
    <scope>DISRUPTION PHENOTYPE</scope>
    <scope>FUNCTION</scope>
</reference>
<reference key="5">
    <citation type="journal article" date="2005" name="Antimicrob. Agents Chemother.">
        <title>Candida albicans zinc cluster protein Upc2p confers resistance to antifungal drugs and is an activator of ergosterol biosynthetic genes.</title>
        <authorList>
            <person name="MacPherson S."/>
            <person name="Akache B."/>
            <person name="Weber S."/>
            <person name="De Deken X."/>
            <person name="Raymond M."/>
            <person name="Turcotte B."/>
        </authorList>
    </citation>
    <scope>DISRUPTION PHENOTYPE</scope>
    <scope>FUNCTION</scope>
    <scope>DNA-BINDING</scope>
</reference>
<reference key="6">
    <citation type="journal article" date="2005" name="Biochem. Biophys. Res. Commun.">
        <title>Global analysis of altered gene expression during morphogenesis of Candida albicans in vitro.</title>
        <authorList>
            <person name="Singh V."/>
            <person name="Sinha I."/>
            <person name="Sadhale P.P."/>
        </authorList>
    </citation>
    <scope>INDUCTION</scope>
</reference>
<reference key="7">
    <citation type="journal article" date="2005" name="Comp. Funct. Genomics">
        <title>In silico analysis for transcription factors with Zn(II)(2)C(6) binuclear cluster DNA-binding domains in Candida albicans.</title>
        <authorList>
            <person name="Maicas S."/>
            <person name="Moreno I."/>
            <person name="Nieto A."/>
            <person name="Gomez M."/>
            <person name="Sentandreu R."/>
            <person name="Valentin E."/>
        </authorList>
    </citation>
    <scope>IDENTIFICATION</scope>
</reference>
<reference key="8">
    <citation type="journal article" date="2005" name="J. Antimicrob. Chemother.">
        <title>Exposure of Candida albicans to antifungal agents affects expression of SAP2 and SAP9 secreted proteinase genes.</title>
        <authorList>
            <person name="Copping V.M.S."/>
            <person name="Barelle C.J."/>
            <person name="Hube B."/>
            <person name="Gow N.A.R."/>
            <person name="Brown A.J.P."/>
            <person name="Odds F.C."/>
        </authorList>
    </citation>
    <scope>INDUCTION</scope>
</reference>
<reference key="9">
    <citation type="journal article" date="2008" name="Eukaryot. Cell">
        <title>A gain-of-function mutation in the transcription factor Upc2p causes upregulation of ergosterol biosynthesis genes and increased fluconazole resistance in a clinical Candida albicans isolate.</title>
        <authorList>
            <person name="Dunkel N."/>
            <person name="Liu T.T."/>
            <person name="Barker K.S."/>
            <person name="Homayouni R."/>
            <person name="Morschhauser J."/>
            <person name="Rogers P.D."/>
        </authorList>
    </citation>
    <scope>FUNCTION</scope>
    <scope>MUTAGENESIS OF GLY-648</scope>
</reference>
<reference key="10">
    <citation type="journal article" date="2008" name="Microbiology">
        <title>Candida albicans UPC2 is transcriptionally induced in response to antifungal drugs and anaerobicity through Upc2p-dependent and -independent mechanisms.</title>
        <authorList>
            <person name="Hoot S.J."/>
            <person name="Oliver B.G."/>
            <person name="White T.C."/>
        </authorList>
    </citation>
    <scope>INDUCTION</scope>
</reference>
<reference key="11">
    <citation type="journal article" date="2010" name="Antimicrob. Agents Chemother.">
        <title>An A643T mutation in the transcription factor Upc2p causes constitutive ERG11 upregulation and increased fluconazole resistance in Candida albicans.</title>
        <authorList>
            <person name="Heilmann C.J."/>
            <person name="Schneider S."/>
            <person name="Barker K.S."/>
            <person name="Rogers P.D."/>
            <person name="Morschhaeuser J."/>
        </authorList>
    </citation>
    <scope>FUNCTION</scope>
    <scope>MUTAGENESIS OF ALA-643</scope>
</reference>
<reference key="12">
    <citation type="journal article" date="2010" name="Eukaryot. Cell">
        <title>The UPC2 promoter in Candida albicans contains two cis-acting elements that bind directly to Upc2p, resulting in transcriptional autoregulation.</title>
        <authorList>
            <person name="Hoot S.J."/>
            <person name="Brown R.P."/>
            <person name="Oliver B.G."/>
            <person name="White T.C."/>
        </authorList>
    </citation>
    <scope>INDUCTION</scope>
    <scope>FUNCTION</scope>
</reference>
<reference key="13">
    <citation type="journal article" date="2011" name="Antimicrob. Agents Chemother.">
        <title>An A643V amino acid substitution in Upc2p contributes to azole resistance in well-characterized clinical isolates of Candida albicans.</title>
        <authorList>
            <person name="Hoot S.J."/>
            <person name="Smith A.R."/>
            <person name="Brown R.P."/>
            <person name="White T.C."/>
        </authorList>
    </citation>
    <scope>FUNCTION</scope>
    <scope>MUTAGENESIS OF ALA-643</scope>
</reference>
<reference key="14">
    <citation type="journal article" date="2012" name="Antimicrob. Agents Chemother.">
        <title>In vitro effect of malachite green on Candida albicans involves multiple pathways and transcriptional regulators UPC2 and STP2.</title>
        <authorList>
            <person name="Dhamgaye S."/>
            <person name="Devaux F."/>
            <person name="Manoharlal R."/>
            <person name="Vandeputte P."/>
            <person name="Shah A.H."/>
            <person name="Singh A."/>
            <person name="Blugeon C."/>
            <person name="Sanglard D."/>
            <person name="Prasad R."/>
        </authorList>
    </citation>
    <scope>FUNCTION</scope>
    <scope>DISRUPTION PHENOTYPE</scope>
</reference>
<reference key="15">
    <citation type="journal article" date="2012" name="Eukaryot. Cell">
        <title>Gain-of-function mutations in UPC2 are a frequent cause of ERG11 upregulation in azole-resistant clinical isolates of Candida albicans.</title>
        <authorList>
            <person name="Flowers S.A."/>
            <person name="Barker K.S."/>
            <person name="Berkow E.L."/>
            <person name="Toner G."/>
            <person name="Chadwick S.G."/>
            <person name="Gygax S.E."/>
            <person name="Morschhauser J."/>
            <person name="Rogers P.D."/>
        </authorList>
    </citation>
    <scope>FUNCTION</scope>
    <scope>MUTAGENESIS OF TRP-478; TYR-642; ALA-643; ALA-646 AND GLY-648</scope>
</reference>
<reference key="16">
    <citation type="journal article" date="2015" name="Antimicrob. Agents Chemother.">
        <title>Induction of Candida albicans drug resistance genes by hybrid zinc cluster transcription factors.</title>
        <authorList>
            <person name="Schneider S."/>
            <person name="Morschhaeuser J."/>
        </authorList>
    </citation>
    <scope>FUNCTION</scope>
</reference>
<reference key="17">
    <citation type="journal article" date="2014" name="Antimicrob. Agents Chemother.">
        <title>Novel antifungal drug discovery based on targeting pathways regulating the fungus-conserved Upc2 transcription factor.</title>
        <authorList>
            <person name="Gallo-Ebert C."/>
            <person name="Donigan M."/>
            <person name="Stroke I.L."/>
            <person name="Swanson R.N."/>
            <person name="Manners M.T."/>
            <person name="Francisco J."/>
            <person name="Toner G."/>
            <person name="Gallagher D."/>
            <person name="Huang C.Y."/>
            <person name="Gygax S.E."/>
            <person name="Webb M."/>
            <person name="Nickels J.T. Jr."/>
        </authorList>
    </citation>
    <scope>FUNCTION</scope>
    <scope>DNA-BINDING</scope>
    <scope>BIOPHYSICOCHEMICAL PROPERTIES</scope>
</reference>
<reference key="18">
    <citation type="journal article" date="2014" name="Eukaryot. Cell">
        <title>Distinct roles of Candida albicans drug resistance transcription factors TAC1, MRR1, and UPC2 in virulence.</title>
        <authorList>
            <person name="Lohberger A."/>
            <person name="Coste A.T."/>
            <person name="Sanglard D."/>
        </authorList>
    </citation>
    <scope>FUNCTION</scope>
</reference>
<reference key="19">
    <citation type="journal article" date="2014" name="Eukaryot. Cell">
        <title>Candida albicans triggers NLRP3-mediated pyroptosis in macrophages.</title>
        <authorList>
            <person name="Wellington M."/>
            <person name="Koselny K."/>
            <person name="Sutterwala F.S."/>
            <person name="Krysan D.J."/>
        </authorList>
    </citation>
    <scope>FUNCTION</scope>
    <scope>DISRUPTION PHENOTYPE</scope>
</reference>
<reference key="20">
    <citation type="journal article" date="2014" name="Eukaryot. Cell">
        <title>UPC2 is universally essential for azole antifungal resistance in Candida albicans.</title>
        <authorList>
            <person name="Vasicek E.M."/>
            <person name="Berkow E.L."/>
            <person name="Flowers S.A."/>
            <person name="Barker K.S."/>
            <person name="Rogers P.D."/>
        </authorList>
    </citation>
    <scope>FUNCTION</scope>
    <scope>DISRUPTION PHENOTYPE</scope>
</reference>
<reference key="21">
    <citation type="journal article" date="2014" name="Eukaryot. Cell">
        <title>Ascorbic acid inhibition of Candida albicans Hsp90-mediated morphogenesis occurs via the transcriptional regulator Upc2.</title>
        <authorList>
            <person name="Van Hauwenhuyse F."/>
            <person name="Fiori A."/>
            <person name="Van Dijck P."/>
        </authorList>
    </citation>
    <scope>FUNCTION</scope>
</reference>
<protein>
    <recommendedName>
        <fullName>Sterol uptake control protein 2</fullName>
    </recommendedName>
</protein>
<organism>
    <name type="scientific">Candida albicans (strain SC5314 / ATCC MYA-2876)</name>
    <name type="common">Yeast</name>
    <dbReference type="NCBI Taxonomy" id="237561"/>
    <lineage>
        <taxon>Eukaryota</taxon>
        <taxon>Fungi</taxon>
        <taxon>Dikarya</taxon>
        <taxon>Ascomycota</taxon>
        <taxon>Saccharomycotina</taxon>
        <taxon>Pichiomycetes</taxon>
        <taxon>Debaryomycetaceae</taxon>
        <taxon>Candida/Lodderomyces clade</taxon>
        <taxon>Candida</taxon>
    </lineage>
</organism>
<comment type="function">
    <text evidence="3 5 7 9 10 11 12 13 14 15 16 17 18 19">Transcription factor involved in the regulation of ergosterol biosynthetic genes such as ERG2 and ERG11 through direct binding to sterol response elements (SREs) in the promoters. Also binds to its own promoter on 2 cis-acting elements to promote autoregulation. Regulates sterol uptake across the plasma membrane. Acts as a major regulator of ascorbic acid-induced response. Plays a role in the triggering of pyroptosis, an inflammasome-mediated programmed cell death pathway in macrophages, allowing macrophages escaping.</text>
</comment>
<comment type="biophysicochemical properties">
    <kinetics>
        <KM evidence="14">50 nM for DNA sterol response element (SRE)</KM>
    </kinetics>
</comment>
<comment type="subcellular location">
    <subcellularLocation>
        <location evidence="1">Nucleus</location>
    </subcellularLocation>
</comment>
<comment type="induction">
    <text evidence="4 6 8 10">Expression is up-regulated by ergosterol depletion, by azoles, and in anaerobic conditions. Transcript is repressed during co-incubated with macrophages, a condition that induces filamentous growth. Promotes positive auto-regulation through binding to its own promoter.</text>
</comment>
<comment type="disruption phenotype">
    <text evidence="3 5 12 16 17">Shows increased susceptibility to the azole drugs ketoconazole, itraconazole, and fluconazole; drugs that act on ergosterol biosynthesis such as terbinafine, fenpropimorph, and lovastatin; as well as malachite green. Leads to lower ergosterol levels. Decreases pyroptosis but has little effect on filamentation in the macrophage.</text>
</comment>
<comment type="miscellaneous">
    <text evidence="13">Gain-of-function mutations in UPC2 are more prevalent among clinical isolates than previously thought and make a significant contribution to azole antifungal resistance.</text>
</comment>
<gene>
    <name evidence="20" type="primary">UPC2</name>
    <name type="synonym">ECM22</name>
    <name type="ordered locus">CAALFM_C108460CA</name>
    <name type="ORF">CaO19.391</name>
    <name type="ORF">CaO19.8021</name>
</gene>
<feature type="chain" id="PRO_0000431801" description="Sterol uptake control protein 2">
    <location>
        <begin position="1"/>
        <end position="712"/>
    </location>
</feature>
<feature type="DNA-binding region" description="Zn(2)-C6 fungal-type" evidence="1">
    <location>
        <begin position="54"/>
        <end position="81"/>
    </location>
</feature>
<feature type="region of interest" description="Disordered" evidence="2">
    <location>
        <begin position="1"/>
        <end position="52"/>
    </location>
</feature>
<feature type="region of interest" description="Disordered" evidence="2">
    <location>
        <begin position="95"/>
        <end position="150"/>
    </location>
</feature>
<feature type="region of interest" description="Disordered" evidence="2">
    <location>
        <begin position="236"/>
        <end position="342"/>
    </location>
</feature>
<feature type="compositionally biased region" description="Polar residues" evidence="2">
    <location>
        <begin position="1"/>
        <end position="19"/>
    </location>
</feature>
<feature type="compositionally biased region" description="Basic residues" evidence="2">
    <location>
        <begin position="35"/>
        <end position="50"/>
    </location>
</feature>
<feature type="compositionally biased region" description="Polar residues" evidence="2">
    <location>
        <begin position="113"/>
        <end position="143"/>
    </location>
</feature>
<feature type="compositionally biased region" description="Polar residues" evidence="2">
    <location>
        <begin position="252"/>
        <end position="306"/>
    </location>
</feature>
<feature type="compositionally biased region" description="Polar residues" evidence="2">
    <location>
        <begin position="326"/>
        <end position="337"/>
    </location>
</feature>
<feature type="mutagenesis site" description="Leads to increased ERG11 expression, increased cellular ergosterol, and decreased susceptibility to fluconazole." evidence="13">
    <original>W</original>
    <variation>C</variation>
    <location>
        <position position="478"/>
    </location>
</feature>
<feature type="mutagenesis site" description="Leads to increased ERG11 expression, increased cellular ergosterol, and decreased susceptibility to fluconazole." evidence="13">
    <original>Y</original>
    <variation>F</variation>
    <location>
        <position position="642"/>
    </location>
</feature>
<feature type="mutagenesis site" description="Leads to increased ERG11 expression, increased cellular ergosterol, and decreased susceptibility to fluconazole." evidence="13">
    <original>A</original>
    <variation>T</variation>
    <variation>V</variation>
    <location>
        <position position="643"/>
    </location>
</feature>
<feature type="mutagenesis site" description="Leads to increased ERG11 expression, increased cellular ergosterol, and decreased susceptibility to fluconazole." evidence="13">
    <original>A</original>
    <variation>V</variation>
    <location>
        <position position="646"/>
    </location>
</feature>
<feature type="mutagenesis site" description="Leads to increased ERG11 expression, increased cellular ergosterol, and decreased susceptibility to fluconazole." evidence="13">
    <original>G</original>
    <variation>D</variation>
    <variation>S</variation>
    <location>
        <position position="648"/>
    </location>
</feature>
<sequence>MMMTVKQESPNSTLNTSEFSSDENLKTNNSEPPKKVSKSSTGKRKYHQKSRNGCSTCKKRRVKCDEQRPVCGNCTKLKLDCGYLHEPLENILNTKKDIANNEPPSKKRKRKVSTVSAASDSESTTQQATPSLTPSPNHSQDIKTQPVIPPTNPLSALSSGLLSAGNLNNLNVAHLVNNLSGLGDLSNLASLGNLASLSNLASLAQLPIDLSNLGSLLDSPAASNIAASFLGSAAATTVPPTTNSEFKESNQRKSQTQMPPQPTVPITSMGAATTTSSHQQANMPSRSKPQPETLQSSIPATTSGSPGMSYPGCPSNSDPFGRSSDKSLPNISPNMSIPANPLSDPLTQGMRSNLNMLDLKLMFHYTSVVANTITGAGISDTNIWNCDIPKLAFEHPFLMHSILAFSATHLSRTEKGLDQCVTCHRGDALRLLREAVLNINADNTDALVASALILIMDSLANASFPSSTSPKSLPASAWIFHVKGAATILTAVWPLTEASRFYKFISVDLGDLGDIINQGVNMNKSKGIDRENSAYYTDLECHDADIADLFPVLLDSPYLITLAYLNKLHKERYKSDFILRIFAFPALLDKQFMGLLMSGDVKAMRIMRSYYKLLRSFTTEMKDKVWFLEGVSQVLPVNVEEYAGGAGGMHMMMDFLGGGPAIVDDNEIDAEITKFDPSGTLTNKLIDTDNLPSVLTSNLDLMQGDNGFMNMK</sequence>
<keyword id="KW-0010">Activator</keyword>
<keyword id="KW-0238">DNA-binding</keyword>
<keyword id="KW-0479">Metal-binding</keyword>
<keyword id="KW-0539">Nucleus</keyword>
<keyword id="KW-1185">Reference proteome</keyword>
<keyword id="KW-0804">Transcription</keyword>
<keyword id="KW-0805">Transcription regulation</keyword>
<keyword id="KW-0843">Virulence</keyword>
<keyword id="KW-0862">Zinc</keyword>
<proteinExistence type="evidence at protein level"/>
<dbReference type="EMBL" id="CP017623">
    <property type="protein sequence ID" value="AOW26484.1"/>
    <property type="molecule type" value="Genomic_DNA"/>
</dbReference>
<dbReference type="RefSeq" id="XP_711879.1">
    <property type="nucleotide sequence ID" value="XM_706786.2"/>
</dbReference>
<dbReference type="SMR" id="Q59QC7"/>
<dbReference type="FunCoup" id="Q59QC7">
    <property type="interactions" value="824"/>
</dbReference>
<dbReference type="STRING" id="237561.Q59QC7"/>
<dbReference type="EnsemblFungi" id="C1_08460C_A-T">
    <property type="protein sequence ID" value="C1_08460C_A-T-p1"/>
    <property type="gene ID" value="C1_08460C_A"/>
</dbReference>
<dbReference type="GeneID" id="3646489"/>
<dbReference type="KEGG" id="cal:CAALFM_C108460CA"/>
<dbReference type="CGD" id="CAL0000191743">
    <property type="gene designation" value="UPC2"/>
</dbReference>
<dbReference type="VEuPathDB" id="FungiDB:C1_08460C_A"/>
<dbReference type="eggNOG" id="ENOG502QRM1">
    <property type="taxonomic scope" value="Eukaryota"/>
</dbReference>
<dbReference type="HOGENOM" id="CLU_011669_0_0_1"/>
<dbReference type="InParanoid" id="Q59QC7"/>
<dbReference type="OMA" id="KRKYHQK"/>
<dbReference type="OrthoDB" id="416217at2759"/>
<dbReference type="SABIO-RK" id="Q59QC7"/>
<dbReference type="PHI-base" id="PHI:8271"/>
<dbReference type="PRO" id="PR:Q59QC7"/>
<dbReference type="Proteomes" id="UP000000559">
    <property type="component" value="Chromosome 1"/>
</dbReference>
<dbReference type="GO" id="GO:0005634">
    <property type="term" value="C:nucleus"/>
    <property type="evidence" value="ECO:0007669"/>
    <property type="project" value="UniProtKB-SubCell"/>
</dbReference>
<dbReference type="GO" id="GO:0003677">
    <property type="term" value="F:DNA binding"/>
    <property type="evidence" value="ECO:0007669"/>
    <property type="project" value="UniProtKB-KW"/>
</dbReference>
<dbReference type="GO" id="GO:0000981">
    <property type="term" value="F:DNA-binding transcription factor activity, RNA polymerase II-specific"/>
    <property type="evidence" value="ECO:0000314"/>
    <property type="project" value="CGD"/>
</dbReference>
<dbReference type="GO" id="GO:0008270">
    <property type="term" value="F:zinc ion binding"/>
    <property type="evidence" value="ECO:0007669"/>
    <property type="project" value="InterPro"/>
</dbReference>
<dbReference type="GO" id="GO:0008204">
    <property type="term" value="P:ergosterol metabolic process"/>
    <property type="evidence" value="ECO:0000315"/>
    <property type="project" value="CGD"/>
</dbReference>
<dbReference type="GO" id="GO:0045892">
    <property type="term" value="P:negative regulation of DNA-templated transcription"/>
    <property type="evidence" value="ECO:0000315"/>
    <property type="project" value="CGD"/>
</dbReference>
<dbReference type="GO" id="GO:0045944">
    <property type="term" value="P:positive regulation of transcription by RNA polymerase II"/>
    <property type="evidence" value="ECO:0000314"/>
    <property type="project" value="CGD"/>
</dbReference>
<dbReference type="GO" id="GO:0006357">
    <property type="term" value="P:regulation of transcription by RNA polymerase II"/>
    <property type="evidence" value="ECO:0000318"/>
    <property type="project" value="GO_Central"/>
</dbReference>
<dbReference type="GO" id="GO:0016125">
    <property type="term" value="P:sterol metabolic process"/>
    <property type="evidence" value="ECO:0000315"/>
    <property type="project" value="CGD"/>
</dbReference>
<dbReference type="CDD" id="cd00067">
    <property type="entry name" value="GAL4"/>
    <property type="match status" value="1"/>
</dbReference>
<dbReference type="Gene3D" id="4.10.240.10">
    <property type="entry name" value="Zn(2)-C6 fungal-type DNA-binding domain"/>
    <property type="match status" value="1"/>
</dbReference>
<dbReference type="InterPro" id="IPR021858">
    <property type="entry name" value="Fun_TF"/>
</dbReference>
<dbReference type="InterPro" id="IPR036864">
    <property type="entry name" value="Zn2-C6_fun-type_DNA-bd_sf"/>
</dbReference>
<dbReference type="InterPro" id="IPR052400">
    <property type="entry name" value="Zn2-C6_fungal_TF"/>
</dbReference>
<dbReference type="InterPro" id="IPR001138">
    <property type="entry name" value="Zn2Cys6_DnaBD"/>
</dbReference>
<dbReference type="PANTHER" id="PTHR47657">
    <property type="entry name" value="STEROL REGULATORY ELEMENT-BINDING PROTEIN ECM22"/>
    <property type="match status" value="1"/>
</dbReference>
<dbReference type="PANTHER" id="PTHR47657:SF7">
    <property type="entry name" value="STEROL REGULATORY ELEMENT-BINDING PROTEIN ECM22"/>
    <property type="match status" value="1"/>
</dbReference>
<dbReference type="Pfam" id="PF11951">
    <property type="entry name" value="Fungal_trans_2"/>
    <property type="match status" value="1"/>
</dbReference>
<dbReference type="Pfam" id="PF00172">
    <property type="entry name" value="Zn_clus"/>
    <property type="match status" value="1"/>
</dbReference>
<dbReference type="SMART" id="SM00066">
    <property type="entry name" value="GAL4"/>
    <property type="match status" value="1"/>
</dbReference>
<dbReference type="SUPFAM" id="SSF57701">
    <property type="entry name" value="Zn2/Cys6 DNA-binding domain"/>
    <property type="match status" value="1"/>
</dbReference>
<dbReference type="PROSITE" id="PS00463">
    <property type="entry name" value="ZN2_CY6_FUNGAL_1"/>
    <property type="match status" value="1"/>
</dbReference>
<dbReference type="PROSITE" id="PS50048">
    <property type="entry name" value="ZN2_CY6_FUNGAL_2"/>
    <property type="match status" value="1"/>
</dbReference>
<name>UPC2_CANAL</name>
<evidence type="ECO:0000255" key="1">
    <source>
        <dbReference type="PROSITE-ProRule" id="PRU00227"/>
    </source>
</evidence>
<evidence type="ECO:0000256" key="2">
    <source>
        <dbReference type="SAM" id="MobiDB-lite"/>
    </source>
</evidence>
<evidence type="ECO:0000269" key="3">
    <source>
    </source>
</evidence>
<evidence type="ECO:0000269" key="4">
    <source>
    </source>
</evidence>
<evidence type="ECO:0000269" key="5">
    <source>
    </source>
</evidence>
<evidence type="ECO:0000269" key="6">
    <source>
    </source>
</evidence>
<evidence type="ECO:0000269" key="7">
    <source>
    </source>
</evidence>
<evidence type="ECO:0000269" key="8">
    <source>
    </source>
</evidence>
<evidence type="ECO:0000269" key="9">
    <source>
    </source>
</evidence>
<evidence type="ECO:0000269" key="10">
    <source>
    </source>
</evidence>
<evidence type="ECO:0000269" key="11">
    <source>
    </source>
</evidence>
<evidence type="ECO:0000269" key="12">
    <source>
    </source>
</evidence>
<evidence type="ECO:0000269" key="13">
    <source>
    </source>
</evidence>
<evidence type="ECO:0000269" key="14">
    <source>
    </source>
</evidence>
<evidence type="ECO:0000269" key="15">
    <source>
    </source>
</evidence>
<evidence type="ECO:0000269" key="16">
    <source>
    </source>
</evidence>
<evidence type="ECO:0000269" key="17">
    <source>
    </source>
</evidence>
<evidence type="ECO:0000269" key="18">
    <source>
    </source>
</evidence>
<evidence type="ECO:0000269" key="19">
    <source>
    </source>
</evidence>
<evidence type="ECO:0000303" key="20">
    <source>
    </source>
</evidence>
<accession>Q59QC7</accession>
<accession>A0A1D8PEC3</accession>